<name>ALR2_AGRFC</name>
<evidence type="ECO:0000250" key="1"/>
<evidence type="ECO:0000305" key="2"/>
<dbReference type="EC" id="5.1.1.1"/>
<dbReference type="EMBL" id="AE007870">
    <property type="protein sequence ID" value="AAK90098.1"/>
    <property type="molecule type" value="Genomic_DNA"/>
</dbReference>
<dbReference type="PIR" id="AF2961">
    <property type="entry name" value="AF2961"/>
</dbReference>
<dbReference type="PIR" id="H98321">
    <property type="entry name" value="H98321"/>
</dbReference>
<dbReference type="RefSeq" id="NP_357313.1">
    <property type="nucleotide sequence ID" value="NC_003063.2"/>
</dbReference>
<dbReference type="RefSeq" id="WP_010972917.1">
    <property type="nucleotide sequence ID" value="NC_003063.2"/>
</dbReference>
<dbReference type="SMR" id="P58737"/>
<dbReference type="STRING" id="176299.Atu3292"/>
<dbReference type="EnsemblBacteria" id="AAK90098">
    <property type="protein sequence ID" value="AAK90098"/>
    <property type="gene ID" value="Atu3292"/>
</dbReference>
<dbReference type="GeneID" id="1135166"/>
<dbReference type="KEGG" id="atu:Atu3292"/>
<dbReference type="PATRIC" id="fig|176299.10.peg.3133"/>
<dbReference type="eggNOG" id="COG0787">
    <property type="taxonomic scope" value="Bacteria"/>
</dbReference>
<dbReference type="HOGENOM" id="CLU_028393_1_1_5"/>
<dbReference type="OrthoDB" id="9813814at2"/>
<dbReference type="PhylomeDB" id="P58737"/>
<dbReference type="BioCyc" id="AGRO:ATU3292-MONOMER"/>
<dbReference type="Proteomes" id="UP000000813">
    <property type="component" value="Chromosome linear"/>
</dbReference>
<dbReference type="GO" id="GO:0005829">
    <property type="term" value="C:cytosol"/>
    <property type="evidence" value="ECO:0007669"/>
    <property type="project" value="TreeGrafter"/>
</dbReference>
<dbReference type="GO" id="GO:0008784">
    <property type="term" value="F:alanine racemase activity"/>
    <property type="evidence" value="ECO:0007669"/>
    <property type="project" value="UniProtKB-UniRule"/>
</dbReference>
<dbReference type="GO" id="GO:0030170">
    <property type="term" value="F:pyridoxal phosphate binding"/>
    <property type="evidence" value="ECO:0007669"/>
    <property type="project" value="UniProtKB-UniRule"/>
</dbReference>
<dbReference type="GO" id="GO:0030632">
    <property type="term" value="P:D-alanine biosynthetic process"/>
    <property type="evidence" value="ECO:0007669"/>
    <property type="project" value="UniProtKB-UniRule"/>
</dbReference>
<dbReference type="CDD" id="cd00430">
    <property type="entry name" value="PLPDE_III_AR"/>
    <property type="match status" value="1"/>
</dbReference>
<dbReference type="Gene3D" id="3.20.20.10">
    <property type="entry name" value="Alanine racemase"/>
    <property type="match status" value="1"/>
</dbReference>
<dbReference type="Gene3D" id="2.40.37.10">
    <property type="entry name" value="Lyase, Ornithine Decarboxylase, Chain A, domain 1"/>
    <property type="match status" value="1"/>
</dbReference>
<dbReference type="HAMAP" id="MF_01201">
    <property type="entry name" value="Ala_racemase"/>
    <property type="match status" value="1"/>
</dbReference>
<dbReference type="InterPro" id="IPR000821">
    <property type="entry name" value="Ala_racemase"/>
</dbReference>
<dbReference type="InterPro" id="IPR009006">
    <property type="entry name" value="Ala_racemase/Decarboxylase_C"/>
</dbReference>
<dbReference type="InterPro" id="IPR011079">
    <property type="entry name" value="Ala_racemase_C"/>
</dbReference>
<dbReference type="InterPro" id="IPR001608">
    <property type="entry name" value="Ala_racemase_N"/>
</dbReference>
<dbReference type="InterPro" id="IPR020622">
    <property type="entry name" value="Ala_racemase_pyridoxalP-BS"/>
</dbReference>
<dbReference type="InterPro" id="IPR029066">
    <property type="entry name" value="PLP-binding_barrel"/>
</dbReference>
<dbReference type="NCBIfam" id="TIGR00492">
    <property type="entry name" value="alr"/>
    <property type="match status" value="1"/>
</dbReference>
<dbReference type="PANTHER" id="PTHR30511">
    <property type="entry name" value="ALANINE RACEMASE"/>
    <property type="match status" value="1"/>
</dbReference>
<dbReference type="PANTHER" id="PTHR30511:SF0">
    <property type="entry name" value="ALANINE RACEMASE, CATABOLIC-RELATED"/>
    <property type="match status" value="1"/>
</dbReference>
<dbReference type="Pfam" id="PF00842">
    <property type="entry name" value="Ala_racemase_C"/>
    <property type="match status" value="1"/>
</dbReference>
<dbReference type="Pfam" id="PF01168">
    <property type="entry name" value="Ala_racemase_N"/>
    <property type="match status" value="1"/>
</dbReference>
<dbReference type="PRINTS" id="PR00992">
    <property type="entry name" value="ALARACEMASE"/>
</dbReference>
<dbReference type="SMART" id="SM01005">
    <property type="entry name" value="Ala_racemase_C"/>
    <property type="match status" value="1"/>
</dbReference>
<dbReference type="SUPFAM" id="SSF50621">
    <property type="entry name" value="Alanine racemase C-terminal domain-like"/>
    <property type="match status" value="1"/>
</dbReference>
<dbReference type="SUPFAM" id="SSF51419">
    <property type="entry name" value="PLP-binding barrel"/>
    <property type="match status" value="1"/>
</dbReference>
<dbReference type="PROSITE" id="PS00395">
    <property type="entry name" value="ALANINE_RACEMASE"/>
    <property type="match status" value="1"/>
</dbReference>
<accession>P58737</accession>
<protein>
    <recommendedName>
        <fullName>Alanine racemase, catabolic</fullName>
        <ecNumber>5.1.1.1</ecNumber>
    </recommendedName>
</protein>
<sequence length="388" mass="40616">MDMQISRQQAAGGASGHLTIDLGALRDNYLTLAGMAPASQTAAVVKADAYGLGADVVSQTLFEAGCRNFFVAHIDEALALRLRLSAKARIFVLNGLQPGNETSCAAMAITPVLNSLEQIAQWSAHARELGKTLTAAVQIDTGMCRLGLSPEELEILSAKQQLLDGIEIAFVMSHLACADEPDHVSNAAQLAVMRKAATAFPETPVCFSNSGGIFLGNDYHNALLRPGIALYGGAPSAAGPNPMKPVVRLDVAVIQTRTVPAGSLVGYGGSFTASVPTRLATIAAGYADGLPRSLSNRGAAWYNGVRLPIAGRVSMDSIILDISALPEGTLTQGSLVQMIGPDQTLEDIAEDAGTIAYEILTGLGRRYRRSYIQPGMSPATASTSVNHK</sequence>
<comment type="function">
    <text evidence="1">Isomerizes L-alanine to D-alanine which is then oxidized to pyruvate by DadA.</text>
</comment>
<comment type="catalytic activity">
    <reaction>
        <text>L-alanine = D-alanine</text>
        <dbReference type="Rhea" id="RHEA:20249"/>
        <dbReference type="ChEBI" id="CHEBI:57416"/>
        <dbReference type="ChEBI" id="CHEBI:57972"/>
        <dbReference type="EC" id="5.1.1.1"/>
    </reaction>
</comment>
<comment type="cofactor">
    <cofactor evidence="1">
        <name>pyridoxal 5'-phosphate</name>
        <dbReference type="ChEBI" id="CHEBI:597326"/>
    </cofactor>
</comment>
<comment type="similarity">
    <text evidence="2">Belongs to the alanine racemase family.</text>
</comment>
<gene>
    <name type="primary">dadB</name>
    <name type="ordered locus">Atu3292</name>
    <name type="ORF">AGR_L_3051</name>
</gene>
<keyword id="KW-0413">Isomerase</keyword>
<keyword id="KW-0663">Pyridoxal phosphate</keyword>
<keyword id="KW-1185">Reference proteome</keyword>
<feature type="chain" id="PRO_0000114493" description="Alanine racemase, catabolic">
    <location>
        <begin position="1"/>
        <end position="388"/>
    </location>
</feature>
<feature type="active site" description="Proton acceptor; specific for D-alanine" evidence="1">
    <location>
        <position position="46"/>
    </location>
</feature>
<feature type="active site" description="Proton acceptor; specific for L-alanine" evidence="1">
    <location>
        <position position="267"/>
    </location>
</feature>
<feature type="binding site" evidence="1">
    <location>
        <position position="145"/>
    </location>
    <ligand>
        <name>substrate</name>
    </ligand>
</feature>
<feature type="binding site" evidence="1">
    <location>
        <position position="315"/>
    </location>
    <ligand>
        <name>substrate</name>
    </ligand>
</feature>
<feature type="modified residue" description="N6-(pyridoxal phosphate)lysine" evidence="1">
    <location>
        <position position="46"/>
    </location>
</feature>
<proteinExistence type="inferred from homology"/>
<reference key="1">
    <citation type="journal article" date="2001" name="Science">
        <title>The genome of the natural genetic engineer Agrobacterium tumefaciens C58.</title>
        <authorList>
            <person name="Wood D.W."/>
            <person name="Setubal J.C."/>
            <person name="Kaul R."/>
            <person name="Monks D.E."/>
            <person name="Kitajima J.P."/>
            <person name="Okura V.K."/>
            <person name="Zhou Y."/>
            <person name="Chen L."/>
            <person name="Wood G.E."/>
            <person name="Almeida N.F. Jr."/>
            <person name="Woo L."/>
            <person name="Chen Y."/>
            <person name="Paulsen I.T."/>
            <person name="Eisen J.A."/>
            <person name="Karp P.D."/>
            <person name="Bovee D. Sr."/>
            <person name="Chapman P."/>
            <person name="Clendenning J."/>
            <person name="Deatherage G."/>
            <person name="Gillet W."/>
            <person name="Grant C."/>
            <person name="Kutyavin T."/>
            <person name="Levy R."/>
            <person name="Li M.-J."/>
            <person name="McClelland E."/>
            <person name="Palmieri A."/>
            <person name="Raymond C."/>
            <person name="Rouse G."/>
            <person name="Saenphimmachak C."/>
            <person name="Wu Z."/>
            <person name="Romero P."/>
            <person name="Gordon D."/>
            <person name="Zhang S."/>
            <person name="Yoo H."/>
            <person name="Tao Y."/>
            <person name="Biddle P."/>
            <person name="Jung M."/>
            <person name="Krespan W."/>
            <person name="Perry M."/>
            <person name="Gordon-Kamm B."/>
            <person name="Liao L."/>
            <person name="Kim S."/>
            <person name="Hendrick C."/>
            <person name="Zhao Z.-Y."/>
            <person name="Dolan M."/>
            <person name="Chumley F."/>
            <person name="Tingey S.V."/>
            <person name="Tomb J.-F."/>
            <person name="Gordon M.P."/>
            <person name="Olson M.V."/>
            <person name="Nester E.W."/>
        </authorList>
    </citation>
    <scope>NUCLEOTIDE SEQUENCE [LARGE SCALE GENOMIC DNA]</scope>
    <source>
        <strain>C58 / ATCC 33970</strain>
    </source>
</reference>
<reference key="2">
    <citation type="journal article" date="2001" name="Science">
        <title>Genome sequence of the plant pathogen and biotechnology agent Agrobacterium tumefaciens C58.</title>
        <authorList>
            <person name="Goodner B."/>
            <person name="Hinkle G."/>
            <person name="Gattung S."/>
            <person name="Miller N."/>
            <person name="Blanchard M."/>
            <person name="Qurollo B."/>
            <person name="Goldman B.S."/>
            <person name="Cao Y."/>
            <person name="Askenazi M."/>
            <person name="Halling C."/>
            <person name="Mullin L."/>
            <person name="Houmiel K."/>
            <person name="Gordon J."/>
            <person name="Vaudin M."/>
            <person name="Iartchouk O."/>
            <person name="Epp A."/>
            <person name="Liu F."/>
            <person name="Wollam C."/>
            <person name="Allinger M."/>
            <person name="Doughty D."/>
            <person name="Scott C."/>
            <person name="Lappas C."/>
            <person name="Markelz B."/>
            <person name="Flanagan C."/>
            <person name="Crowell C."/>
            <person name="Gurson J."/>
            <person name="Lomo C."/>
            <person name="Sear C."/>
            <person name="Strub G."/>
            <person name="Cielo C."/>
            <person name="Slater S."/>
        </authorList>
    </citation>
    <scope>NUCLEOTIDE SEQUENCE [LARGE SCALE GENOMIC DNA]</scope>
    <source>
        <strain>C58 / ATCC 33970</strain>
    </source>
</reference>
<organism>
    <name type="scientific">Agrobacterium fabrum (strain C58 / ATCC 33970)</name>
    <name type="common">Agrobacterium tumefaciens (strain C58)</name>
    <dbReference type="NCBI Taxonomy" id="176299"/>
    <lineage>
        <taxon>Bacteria</taxon>
        <taxon>Pseudomonadati</taxon>
        <taxon>Pseudomonadota</taxon>
        <taxon>Alphaproteobacteria</taxon>
        <taxon>Hyphomicrobiales</taxon>
        <taxon>Rhizobiaceae</taxon>
        <taxon>Rhizobium/Agrobacterium group</taxon>
        <taxon>Agrobacterium</taxon>
        <taxon>Agrobacterium tumefaciens complex</taxon>
    </lineage>
</organism>